<dbReference type="EC" id="7.1.2.2" evidence="1"/>
<dbReference type="EMBL" id="DQ673255">
    <property type="protein sequence ID" value="ABG74637.1"/>
    <property type="molecule type" value="Genomic_DNA"/>
</dbReference>
<dbReference type="RefSeq" id="YP_778499.1">
    <property type="nucleotide sequence ID" value="NC_008407.1"/>
</dbReference>
<dbReference type="SMR" id="Q06RC2"/>
<dbReference type="GeneID" id="4319767"/>
<dbReference type="GO" id="GO:0009535">
    <property type="term" value="C:chloroplast thylakoid membrane"/>
    <property type="evidence" value="ECO:0007669"/>
    <property type="project" value="UniProtKB-SubCell"/>
</dbReference>
<dbReference type="GO" id="GO:0005739">
    <property type="term" value="C:mitochondrion"/>
    <property type="evidence" value="ECO:0007669"/>
    <property type="project" value="GOC"/>
</dbReference>
<dbReference type="GO" id="GO:0045259">
    <property type="term" value="C:proton-transporting ATP synthase complex"/>
    <property type="evidence" value="ECO:0007669"/>
    <property type="project" value="UniProtKB-KW"/>
</dbReference>
<dbReference type="GO" id="GO:0005524">
    <property type="term" value="F:ATP binding"/>
    <property type="evidence" value="ECO:0007669"/>
    <property type="project" value="UniProtKB-UniRule"/>
</dbReference>
<dbReference type="GO" id="GO:0016887">
    <property type="term" value="F:ATP hydrolysis activity"/>
    <property type="evidence" value="ECO:0007669"/>
    <property type="project" value="InterPro"/>
</dbReference>
<dbReference type="GO" id="GO:0046933">
    <property type="term" value="F:proton-transporting ATP synthase activity, rotational mechanism"/>
    <property type="evidence" value="ECO:0007669"/>
    <property type="project" value="UniProtKB-UniRule"/>
</dbReference>
<dbReference type="GO" id="GO:0042776">
    <property type="term" value="P:proton motive force-driven mitochondrial ATP synthesis"/>
    <property type="evidence" value="ECO:0007669"/>
    <property type="project" value="TreeGrafter"/>
</dbReference>
<dbReference type="CDD" id="cd18110">
    <property type="entry name" value="ATP-synt_F1_beta_C"/>
    <property type="match status" value="1"/>
</dbReference>
<dbReference type="CDD" id="cd18115">
    <property type="entry name" value="ATP-synt_F1_beta_N"/>
    <property type="match status" value="1"/>
</dbReference>
<dbReference type="CDD" id="cd01133">
    <property type="entry name" value="F1-ATPase_beta_CD"/>
    <property type="match status" value="1"/>
</dbReference>
<dbReference type="FunFam" id="1.10.1140.10:FF:000001">
    <property type="entry name" value="ATP synthase subunit beta"/>
    <property type="match status" value="1"/>
</dbReference>
<dbReference type="FunFam" id="3.40.50.12240:FF:000006">
    <property type="entry name" value="ATP synthase subunit beta"/>
    <property type="match status" value="1"/>
</dbReference>
<dbReference type="FunFam" id="3.40.50.300:FF:000026">
    <property type="entry name" value="ATP synthase subunit beta"/>
    <property type="match status" value="1"/>
</dbReference>
<dbReference type="FunFam" id="2.40.10.170:FF:000002">
    <property type="entry name" value="ATP synthase subunit beta, chloroplastic"/>
    <property type="match status" value="1"/>
</dbReference>
<dbReference type="Gene3D" id="2.40.10.170">
    <property type="match status" value="1"/>
</dbReference>
<dbReference type="Gene3D" id="1.10.1140.10">
    <property type="entry name" value="Bovine Mitochondrial F1-atpase, Atp Synthase Beta Chain, Chain D, domain 3"/>
    <property type="match status" value="1"/>
</dbReference>
<dbReference type="Gene3D" id="3.40.50.300">
    <property type="entry name" value="P-loop containing nucleotide triphosphate hydrolases"/>
    <property type="match status" value="1"/>
</dbReference>
<dbReference type="HAMAP" id="MF_01347">
    <property type="entry name" value="ATP_synth_beta_bact"/>
    <property type="match status" value="1"/>
</dbReference>
<dbReference type="InterPro" id="IPR003593">
    <property type="entry name" value="AAA+_ATPase"/>
</dbReference>
<dbReference type="InterPro" id="IPR055190">
    <property type="entry name" value="ATP-synt_VA_C"/>
</dbReference>
<dbReference type="InterPro" id="IPR005722">
    <property type="entry name" value="ATP_synth_F1_bsu"/>
</dbReference>
<dbReference type="InterPro" id="IPR020003">
    <property type="entry name" value="ATPase_a/bsu_AS"/>
</dbReference>
<dbReference type="InterPro" id="IPR050053">
    <property type="entry name" value="ATPase_alpha/beta_chains"/>
</dbReference>
<dbReference type="InterPro" id="IPR004100">
    <property type="entry name" value="ATPase_F1/V1/A1_a/bsu_N"/>
</dbReference>
<dbReference type="InterPro" id="IPR036121">
    <property type="entry name" value="ATPase_F1/V1/A1_a/bsu_N_sf"/>
</dbReference>
<dbReference type="InterPro" id="IPR000194">
    <property type="entry name" value="ATPase_F1/V1/A1_a/bsu_nucl-bd"/>
</dbReference>
<dbReference type="InterPro" id="IPR024034">
    <property type="entry name" value="ATPase_F1/V1_b/a_C"/>
</dbReference>
<dbReference type="InterPro" id="IPR027417">
    <property type="entry name" value="P-loop_NTPase"/>
</dbReference>
<dbReference type="NCBIfam" id="TIGR01039">
    <property type="entry name" value="atpD"/>
    <property type="match status" value="1"/>
</dbReference>
<dbReference type="PANTHER" id="PTHR15184">
    <property type="entry name" value="ATP SYNTHASE"/>
    <property type="match status" value="1"/>
</dbReference>
<dbReference type="PANTHER" id="PTHR15184:SF71">
    <property type="entry name" value="ATP SYNTHASE SUBUNIT BETA, MITOCHONDRIAL"/>
    <property type="match status" value="1"/>
</dbReference>
<dbReference type="Pfam" id="PF00006">
    <property type="entry name" value="ATP-synt_ab"/>
    <property type="match status" value="1"/>
</dbReference>
<dbReference type="Pfam" id="PF02874">
    <property type="entry name" value="ATP-synt_ab_N"/>
    <property type="match status" value="1"/>
</dbReference>
<dbReference type="Pfam" id="PF22919">
    <property type="entry name" value="ATP-synt_VA_C"/>
    <property type="match status" value="1"/>
</dbReference>
<dbReference type="SMART" id="SM00382">
    <property type="entry name" value="AAA"/>
    <property type="match status" value="1"/>
</dbReference>
<dbReference type="SUPFAM" id="SSF47917">
    <property type="entry name" value="C-terminal domain of alpha and beta subunits of F1 ATP synthase"/>
    <property type="match status" value="1"/>
</dbReference>
<dbReference type="SUPFAM" id="SSF50615">
    <property type="entry name" value="N-terminal domain of alpha and beta subunits of F1 ATP synthase"/>
    <property type="match status" value="1"/>
</dbReference>
<dbReference type="SUPFAM" id="SSF52540">
    <property type="entry name" value="P-loop containing nucleoside triphosphate hydrolases"/>
    <property type="match status" value="1"/>
</dbReference>
<dbReference type="PROSITE" id="PS00152">
    <property type="entry name" value="ATPASE_ALPHA_BETA"/>
    <property type="match status" value="1"/>
</dbReference>
<protein>
    <recommendedName>
        <fullName evidence="1">ATP synthase subunit beta, chloroplastic</fullName>
        <ecNumber evidence="1">7.1.2.2</ecNumber>
    </recommendedName>
    <alternativeName>
        <fullName evidence="1">ATP synthase F1 sector subunit beta</fullName>
    </alternativeName>
    <alternativeName>
        <fullName evidence="1">F-ATPase subunit beta</fullName>
    </alternativeName>
</protein>
<comment type="function">
    <text evidence="1">Produces ATP from ADP in the presence of a proton gradient across the membrane. The catalytic sites are hosted primarily by the beta subunits.</text>
</comment>
<comment type="catalytic activity">
    <reaction evidence="1">
        <text>ATP + H2O + 4 H(+)(in) = ADP + phosphate + 5 H(+)(out)</text>
        <dbReference type="Rhea" id="RHEA:57720"/>
        <dbReference type="ChEBI" id="CHEBI:15377"/>
        <dbReference type="ChEBI" id="CHEBI:15378"/>
        <dbReference type="ChEBI" id="CHEBI:30616"/>
        <dbReference type="ChEBI" id="CHEBI:43474"/>
        <dbReference type="ChEBI" id="CHEBI:456216"/>
        <dbReference type="EC" id="7.1.2.2"/>
    </reaction>
</comment>
<comment type="subunit">
    <text evidence="1">F-type ATPases have 2 components, CF(1) - the catalytic core - and CF(0) - the membrane proton channel. CF(1) has five subunits: alpha(3), beta(3), gamma(1), delta(1), epsilon(1). CF(0) has four main subunits: a(1), b(1), b'(1) and c(9-12).</text>
</comment>
<comment type="subcellular location">
    <subcellularLocation>
        <location evidence="1">Plastid</location>
        <location evidence="1">Chloroplast thylakoid membrane</location>
        <topology evidence="1">Peripheral membrane protein</topology>
    </subcellularLocation>
</comment>
<comment type="similarity">
    <text evidence="1">Belongs to the ATPase alpha/beta chains family.</text>
</comment>
<proteinExistence type="inferred from homology"/>
<name>ATPB_JASNU</name>
<organism>
    <name type="scientific">Jasminum nudiflorum</name>
    <name type="common">Winter jasmine</name>
    <dbReference type="NCBI Taxonomy" id="126431"/>
    <lineage>
        <taxon>Eukaryota</taxon>
        <taxon>Viridiplantae</taxon>
        <taxon>Streptophyta</taxon>
        <taxon>Embryophyta</taxon>
        <taxon>Tracheophyta</taxon>
        <taxon>Spermatophyta</taxon>
        <taxon>Magnoliopsida</taxon>
        <taxon>eudicotyledons</taxon>
        <taxon>Gunneridae</taxon>
        <taxon>Pentapetalae</taxon>
        <taxon>asterids</taxon>
        <taxon>lamiids</taxon>
        <taxon>Lamiales</taxon>
        <taxon>Oleaceae</taxon>
        <taxon>Jasmineae</taxon>
        <taxon>Jasminum</taxon>
    </lineage>
</organism>
<keyword id="KW-0066">ATP synthesis</keyword>
<keyword id="KW-0067">ATP-binding</keyword>
<keyword id="KW-0139">CF(1)</keyword>
<keyword id="KW-0150">Chloroplast</keyword>
<keyword id="KW-0375">Hydrogen ion transport</keyword>
<keyword id="KW-0406">Ion transport</keyword>
<keyword id="KW-0472">Membrane</keyword>
<keyword id="KW-0547">Nucleotide-binding</keyword>
<keyword id="KW-0934">Plastid</keyword>
<keyword id="KW-0793">Thylakoid</keyword>
<keyword id="KW-1278">Translocase</keyword>
<keyword id="KW-0813">Transport</keyword>
<accession>Q06RC2</accession>
<sequence>MRMNPTTSGSGVSTLEKKNLGRIVQIIGPVLDVSFPSGKMPNIYNALVVQGRDTVGQAINVTCEVQQLLGNNRVRAVAMSATDGLMRGMEVIDTGAPLSVPVGGATLGRIFNVLGEPVDELGPVDTRTTSPIHRSAPAFIQLDTKLSIFETGIKVVDLLAPYRRGGKIGLFGGAGVGKTVLIMELINNIAKAHGGVSVFGGVGERTREGNDLYMEMKESGVINEENIAESKVALVYGQMNEPPGARMRVGLTALTMAEYFRDVNEQDVLLFIDNIFRFVQAGSEVSALLGRMPSAVGYQPTLSTEMGTLQERITSTKEGSITSIQAVYVPADDLTDPAPATTFAHLDATTVLSRGLAAKGIYPAVDPLDSTSTMLQPRIVGEEHYKIAQRVKQTLQRYKELQDIIAILGLDELSEEDRLTVARARKIERFLSQPFFVAEVFTGSPGKYVGLAETIRGFQLILSGELDGLPEQAFYLVGNIDEATAKAMNLEMESNLKK</sequence>
<evidence type="ECO:0000255" key="1">
    <source>
        <dbReference type="HAMAP-Rule" id="MF_01347"/>
    </source>
</evidence>
<feature type="chain" id="PRO_0000275183" description="ATP synthase subunit beta, chloroplastic">
    <location>
        <begin position="1"/>
        <end position="498"/>
    </location>
</feature>
<feature type="binding site" evidence="1">
    <location>
        <begin position="172"/>
        <end position="179"/>
    </location>
    <ligand>
        <name>ATP</name>
        <dbReference type="ChEBI" id="CHEBI:30616"/>
    </ligand>
</feature>
<gene>
    <name evidence="1" type="primary">atpB</name>
    <name type="ORF">JNC0590</name>
</gene>
<reference key="1">
    <citation type="journal article" date="2007" name="Mol. Biol. Evol.">
        <title>Gene relocations within chloroplast genomes of Jasminum and Menodora (Oleaceae) are due to multiple, overlapping inversions.</title>
        <authorList>
            <person name="Lee H.-L."/>
            <person name="Jansen R.K."/>
            <person name="Chumley T.W."/>
            <person name="Kim K.-J."/>
        </authorList>
    </citation>
    <scope>NUCLEOTIDE SEQUENCE [LARGE SCALE GENOMIC DNA]</scope>
</reference>
<geneLocation type="chloroplast"/>